<feature type="signal peptide" evidence="1">
    <location>
        <begin position="1"/>
        <end position="27"/>
    </location>
</feature>
<feature type="propeptide" id="PRO_0000458789" evidence="5">
    <location>
        <begin position="28"/>
        <end position="45"/>
    </location>
</feature>
<feature type="peptide" id="PRO_0000458790" description="Mastoparan-VT4" evidence="2">
    <location>
        <begin position="46"/>
        <end position="59"/>
    </location>
</feature>
<feature type="repeat" description="AXPX 1" evidence="4">
    <location>
        <begin position="27"/>
        <end position="30"/>
    </location>
</feature>
<feature type="repeat" description="AXPX 2" evidence="4">
    <location>
        <begin position="31"/>
        <end position="34"/>
    </location>
</feature>
<feature type="repeat" description="AXPX 3" evidence="4">
    <location>
        <begin position="35"/>
        <end position="38"/>
    </location>
</feature>
<feature type="repeat" description="AXPX 4" evidence="4">
    <location>
        <begin position="41"/>
        <end position="44"/>
    </location>
</feature>
<feature type="modified residue" description="Leucine amide" evidence="2">
    <location>
        <position position="59"/>
    </location>
</feature>
<name>MAST4_VESTR</name>
<keyword id="KW-0027">Amidation</keyword>
<keyword id="KW-0044">Antibiotic</keyword>
<keyword id="KW-0929">Antimicrobial</keyword>
<keyword id="KW-0295">Fungicide</keyword>
<keyword id="KW-0391">Immunity</keyword>
<keyword id="KW-0399">Innate immunity</keyword>
<keyword id="KW-0677">Repeat</keyword>
<keyword id="KW-0964">Secreted</keyword>
<keyword id="KW-0732">Signal</keyword>
<dbReference type="SMR" id="P0DQZ6"/>
<dbReference type="GO" id="GO:0005576">
    <property type="term" value="C:extracellular region"/>
    <property type="evidence" value="ECO:0007669"/>
    <property type="project" value="UniProtKB-SubCell"/>
</dbReference>
<dbReference type="GO" id="GO:0042742">
    <property type="term" value="P:defense response to bacterium"/>
    <property type="evidence" value="ECO:0007669"/>
    <property type="project" value="UniProtKB-KW"/>
</dbReference>
<dbReference type="GO" id="GO:0050832">
    <property type="term" value="P:defense response to fungus"/>
    <property type="evidence" value="ECO:0007669"/>
    <property type="project" value="UniProtKB-KW"/>
</dbReference>
<dbReference type="GO" id="GO:0045087">
    <property type="term" value="P:innate immune response"/>
    <property type="evidence" value="ECO:0007669"/>
    <property type="project" value="UniProtKB-KW"/>
</dbReference>
<dbReference type="GO" id="GO:0031640">
    <property type="term" value="P:killing of cells of another organism"/>
    <property type="evidence" value="ECO:0007669"/>
    <property type="project" value="UniProtKB-KW"/>
</dbReference>
<comment type="function">
    <text evidence="2">The synthetic peptide shows antimicrobial activities against Gram-negative bacteria (but not against all strains tested), Gram-positive bacteria (not all strains tested) and the fungi C.albicans and C.parapsilosis. Exhibits little hemolytic activity against washed human erythrocytes.</text>
</comment>
<comment type="subcellular location">
    <subcellularLocation>
        <location evidence="5">Secreted</location>
    </subcellularLocation>
</comment>
<comment type="tissue specificity">
    <text evidence="5">Expressed by the venom gland.</text>
</comment>
<comment type="similarity">
    <text evidence="4">Belongs to the MCD family. Mastoparan subfamily.</text>
</comment>
<protein>
    <recommendedName>
        <fullName evidence="3">Mastoparan-VT4</fullName>
    </recommendedName>
</protein>
<reference key="1">
    <citation type="journal article" date="2013" name="Toxicon">
        <title>Antimicrobial peptides from the venom gland of the social wasp Vespa tropica.</title>
        <authorList>
            <person name="Yang X."/>
            <person name="Wang Y."/>
            <person name="Lee W.H."/>
            <person name="Zhang Y."/>
        </authorList>
    </citation>
    <scope>NUCLEOTIDE SEQUENCE [MRNA]</scope>
    <scope>FUNCTION</scope>
    <scope>PROBABLE AMIDATION AT LEU-59</scope>
    <scope>SYNTHESIS OF 46-59</scope>
    <source>
        <tissue>Venom gland</tissue>
    </source>
</reference>
<accession>P0DQZ6</accession>
<evidence type="ECO:0000255" key="1"/>
<evidence type="ECO:0000269" key="2">
    <source>
    </source>
</evidence>
<evidence type="ECO:0000303" key="3">
    <source>
    </source>
</evidence>
<evidence type="ECO:0000305" key="4"/>
<evidence type="ECO:0000305" key="5">
    <source>
    </source>
</evidence>
<sequence>MKNPILILFTAFIALLGFFGMSAEALADPKADPLAGPNPDADPEAINLKAIAPLAKKLLG</sequence>
<organism>
    <name type="scientific">Vespa tropica</name>
    <name type="common">Greater banded hornet</name>
    <name type="synonym">Sphex tropica</name>
    <dbReference type="NCBI Taxonomy" id="7450"/>
    <lineage>
        <taxon>Eukaryota</taxon>
        <taxon>Metazoa</taxon>
        <taxon>Ecdysozoa</taxon>
        <taxon>Arthropoda</taxon>
        <taxon>Hexapoda</taxon>
        <taxon>Insecta</taxon>
        <taxon>Pterygota</taxon>
        <taxon>Neoptera</taxon>
        <taxon>Endopterygota</taxon>
        <taxon>Hymenoptera</taxon>
        <taxon>Apocrita</taxon>
        <taxon>Aculeata</taxon>
        <taxon>Vespoidea</taxon>
        <taxon>Vespidae</taxon>
        <taxon>Vespinae</taxon>
        <taxon>Vespa</taxon>
    </lineage>
</organism>
<proteinExistence type="evidence at protein level"/>